<reference key="1">
    <citation type="journal article" date="2011" name="MBio">
        <title>Novel metabolic attributes of the genus Cyanothece, comprising a group of unicellular nitrogen-fixing Cyanobacteria.</title>
        <authorList>
            <person name="Bandyopadhyay A."/>
            <person name="Elvitigala T."/>
            <person name="Welsh E."/>
            <person name="Stockel J."/>
            <person name="Liberton M."/>
            <person name="Min H."/>
            <person name="Sherman L.A."/>
            <person name="Pakrasi H.B."/>
        </authorList>
    </citation>
    <scope>NUCLEOTIDE SEQUENCE [LARGE SCALE GENOMIC DNA]</scope>
    <source>
        <strain>PCC 7425 / ATCC 29141</strain>
    </source>
</reference>
<gene>
    <name type="ordered locus">Cyan7425_4067</name>
</gene>
<evidence type="ECO:0000250" key="1"/>
<evidence type="ECO:0000255" key="2"/>
<evidence type="ECO:0000305" key="3"/>
<keyword id="KW-0997">Cell inner membrane</keyword>
<keyword id="KW-1003">Cell membrane</keyword>
<keyword id="KW-0472">Membrane</keyword>
<keyword id="KW-0812">Transmembrane</keyword>
<keyword id="KW-1133">Transmembrane helix</keyword>
<accession>B8HWF5</accession>
<comment type="subcellular location">
    <subcellularLocation>
        <location evidence="1">Cell inner membrane</location>
        <topology evidence="1">Single-pass membrane protein</topology>
    </subcellularLocation>
</comment>
<comment type="similarity">
    <text evidence="3">Belongs to the UPF0754 family.</text>
</comment>
<name>Y4067_CYAP4</name>
<dbReference type="EMBL" id="CP001344">
    <property type="protein sequence ID" value="ACL46381.1"/>
    <property type="molecule type" value="Genomic_DNA"/>
</dbReference>
<dbReference type="STRING" id="395961.Cyan7425_4067"/>
<dbReference type="KEGG" id="cyn:Cyan7425_4067"/>
<dbReference type="eggNOG" id="COG4399">
    <property type="taxonomic scope" value="Bacteria"/>
</dbReference>
<dbReference type="HOGENOM" id="CLU_042384_0_1_3"/>
<dbReference type="OrthoDB" id="9787430at2"/>
<dbReference type="GO" id="GO:0005886">
    <property type="term" value="C:plasma membrane"/>
    <property type="evidence" value="ECO:0007669"/>
    <property type="project" value="UniProtKB-SubCell"/>
</dbReference>
<dbReference type="InterPro" id="IPR007383">
    <property type="entry name" value="DUF445"/>
</dbReference>
<dbReference type="InterPro" id="IPR016991">
    <property type="entry name" value="UCP032178"/>
</dbReference>
<dbReference type="PANTHER" id="PTHR35791">
    <property type="entry name" value="UPF0754 MEMBRANE PROTEIN YHEB"/>
    <property type="match status" value="1"/>
</dbReference>
<dbReference type="PANTHER" id="PTHR35791:SF1">
    <property type="entry name" value="UPF0754 MEMBRANE PROTEIN YHEB"/>
    <property type="match status" value="1"/>
</dbReference>
<dbReference type="Pfam" id="PF04286">
    <property type="entry name" value="DUF445"/>
    <property type="match status" value="1"/>
</dbReference>
<dbReference type="PIRSF" id="PIRSF032178">
    <property type="entry name" value="UCP032178"/>
    <property type="match status" value="1"/>
</dbReference>
<sequence length="406" mass="45749">MALSVPPIAGAIIGYFTNDLAITMLFRPYKPIKIGQRTLPFTPGLIPANQERLARRISDAIMGSLLTPEELQKLTRRLLQTERVQAAIQWLLKMALDQVQSETEQKSAQVLAHILHDLLGSAIPRLIRVWARREDFLEAQLNQIFDQVLLELKLSEEQAGRIADWLLQVVLPPDRLRQTLIDFLTDRNIQVIDEDLREKTSGTYWVVANLFGVRNTLIRLRDFCIEEREACNVRLAELMDALGVRQRLIEGLQDLSLQNLPVATVRQLRKVFRQNVRIYIQSQGLELVKGLSDSLNWEHVSLSILNRLRSSTAVTASLEVVSQELALVLERYLERDLEIIVEKAIPILNLDEVIVERVKATTPQELEAAIQGIVKSELQAIVTLGGVLGLLIGIAQSVLLLVQGGL</sequence>
<proteinExistence type="inferred from homology"/>
<organism>
    <name type="scientific">Cyanothece sp. (strain PCC 7425 / ATCC 29141)</name>
    <dbReference type="NCBI Taxonomy" id="395961"/>
    <lineage>
        <taxon>Bacteria</taxon>
        <taxon>Bacillati</taxon>
        <taxon>Cyanobacteriota</taxon>
        <taxon>Cyanophyceae</taxon>
        <taxon>Gomontiellales</taxon>
        <taxon>Cyanothecaceae</taxon>
        <taxon>Cyanothece</taxon>
    </lineage>
</organism>
<feature type="chain" id="PRO_0000388289" description="UPF0754 membrane protein Cyan7425_4067">
    <location>
        <begin position="1"/>
        <end position="406"/>
    </location>
</feature>
<feature type="transmembrane region" description="Helical" evidence="2">
    <location>
        <begin position="381"/>
        <end position="401"/>
    </location>
</feature>
<protein>
    <recommendedName>
        <fullName>UPF0754 membrane protein Cyan7425_4067</fullName>
    </recommendedName>
</protein>